<evidence type="ECO:0000255" key="1">
    <source>
        <dbReference type="HAMAP-Rule" id="MF_00003"/>
    </source>
</evidence>
<dbReference type="EMBL" id="CU179680">
    <property type="protein sequence ID" value="CAL59429.1"/>
    <property type="molecule type" value="Genomic_DNA"/>
</dbReference>
<dbReference type="RefSeq" id="WP_011949882.1">
    <property type="nucleotide sequence ID" value="NC_009497.1"/>
</dbReference>
<dbReference type="SMR" id="A5IZH0"/>
<dbReference type="STRING" id="347257.MAG7290"/>
<dbReference type="GeneID" id="93358454"/>
<dbReference type="KEGG" id="maa:MAG7290"/>
<dbReference type="HOGENOM" id="CLU_089475_3_2_14"/>
<dbReference type="Proteomes" id="UP000007065">
    <property type="component" value="Chromosome"/>
</dbReference>
<dbReference type="GO" id="GO:0005829">
    <property type="term" value="C:cytosol"/>
    <property type="evidence" value="ECO:0007669"/>
    <property type="project" value="TreeGrafter"/>
</dbReference>
<dbReference type="GO" id="GO:0043024">
    <property type="term" value="F:ribosomal small subunit binding"/>
    <property type="evidence" value="ECO:0007669"/>
    <property type="project" value="TreeGrafter"/>
</dbReference>
<dbReference type="GO" id="GO:0030490">
    <property type="term" value="P:maturation of SSU-rRNA"/>
    <property type="evidence" value="ECO:0007669"/>
    <property type="project" value="UniProtKB-UniRule"/>
</dbReference>
<dbReference type="Gene3D" id="3.30.300.20">
    <property type="match status" value="1"/>
</dbReference>
<dbReference type="HAMAP" id="MF_00003">
    <property type="entry name" value="RbfA"/>
    <property type="match status" value="1"/>
</dbReference>
<dbReference type="InterPro" id="IPR015946">
    <property type="entry name" value="KH_dom-like_a/b"/>
</dbReference>
<dbReference type="InterPro" id="IPR000238">
    <property type="entry name" value="RbfA"/>
</dbReference>
<dbReference type="InterPro" id="IPR023799">
    <property type="entry name" value="RbfA_dom_sf"/>
</dbReference>
<dbReference type="InterPro" id="IPR020053">
    <property type="entry name" value="Ribosome-bd_factorA_CS"/>
</dbReference>
<dbReference type="NCBIfam" id="TIGR00082">
    <property type="entry name" value="rbfA"/>
    <property type="match status" value="1"/>
</dbReference>
<dbReference type="PANTHER" id="PTHR33515">
    <property type="entry name" value="RIBOSOME-BINDING FACTOR A, CHLOROPLASTIC-RELATED"/>
    <property type="match status" value="1"/>
</dbReference>
<dbReference type="PANTHER" id="PTHR33515:SF1">
    <property type="entry name" value="RIBOSOME-BINDING FACTOR A, CHLOROPLASTIC-RELATED"/>
    <property type="match status" value="1"/>
</dbReference>
<dbReference type="Pfam" id="PF02033">
    <property type="entry name" value="RBFA"/>
    <property type="match status" value="1"/>
</dbReference>
<dbReference type="SUPFAM" id="SSF89919">
    <property type="entry name" value="Ribosome-binding factor A, RbfA"/>
    <property type="match status" value="1"/>
</dbReference>
<dbReference type="PROSITE" id="PS01319">
    <property type="entry name" value="RBFA"/>
    <property type="match status" value="1"/>
</dbReference>
<comment type="function">
    <text evidence="1">One of several proteins that assist in the late maturation steps of the functional core of the 30S ribosomal subunit. Associates with free 30S ribosomal subunits (but not with 30S subunits that are part of 70S ribosomes or polysomes). Required for efficient processing of 16S rRNA. May interact with the 5'-terminal helix region of 16S rRNA.</text>
</comment>
<comment type="subunit">
    <text evidence="1">Monomer. Binds 30S ribosomal subunits, but not 50S ribosomal subunits or 70S ribosomes.</text>
</comment>
<comment type="subcellular location">
    <subcellularLocation>
        <location evidence="1">Cytoplasm</location>
    </subcellularLocation>
</comment>
<comment type="similarity">
    <text evidence="1">Belongs to the RbfA family.</text>
</comment>
<protein>
    <recommendedName>
        <fullName evidence="1">Ribosome-binding factor A</fullName>
    </recommendedName>
</protein>
<sequence>MKKSISVLRKESQIKNFISTIITNELTNANIYNPTVTDVVLSTDLGHVKVFLAFSSKENDGLDAVKNASGYIRKRLSKTLNWRKVPELHFYIDEVEKKAFEIDQILNSLKNEE</sequence>
<proteinExistence type="inferred from homology"/>
<organism>
    <name type="scientific">Mycoplasmopsis agalactiae (strain NCTC 10123 / CIP 59.7 / PG2)</name>
    <name type="common">Mycoplasma agalactiae</name>
    <dbReference type="NCBI Taxonomy" id="347257"/>
    <lineage>
        <taxon>Bacteria</taxon>
        <taxon>Bacillati</taxon>
        <taxon>Mycoplasmatota</taxon>
        <taxon>Mycoplasmoidales</taxon>
        <taxon>Metamycoplasmataceae</taxon>
        <taxon>Mycoplasmopsis</taxon>
    </lineage>
</organism>
<accession>A5IZH0</accession>
<reference key="1">
    <citation type="journal article" date="2007" name="PLoS Genet.">
        <title>Being pathogenic, plastic, and sexual while living with a nearly minimal bacterial genome.</title>
        <authorList>
            <person name="Sirand-Pugnet P."/>
            <person name="Lartigue C."/>
            <person name="Marenda M."/>
            <person name="Jacob D."/>
            <person name="Barre A."/>
            <person name="Barbe V."/>
            <person name="Schenowitz C."/>
            <person name="Mangenot S."/>
            <person name="Couloux A."/>
            <person name="Segurens B."/>
            <person name="de Daruvar A."/>
            <person name="Blanchard A."/>
            <person name="Citti C."/>
        </authorList>
    </citation>
    <scope>NUCLEOTIDE SEQUENCE [LARGE SCALE GENOMIC DNA]</scope>
    <source>
        <strain>NCTC 10123 / CIP 59.7 / PG2</strain>
    </source>
</reference>
<keyword id="KW-0963">Cytoplasm</keyword>
<keyword id="KW-1185">Reference proteome</keyword>
<keyword id="KW-0690">Ribosome biogenesis</keyword>
<feature type="chain" id="PRO_1000088906" description="Ribosome-binding factor A">
    <location>
        <begin position="1"/>
        <end position="113"/>
    </location>
</feature>
<gene>
    <name evidence="1" type="primary">rbfA</name>
    <name type="ordered locus">MAG7290</name>
</gene>
<name>RBFA_MYCAP</name>